<feature type="chain" id="PRO_0000330561" description="Siroheme synthase">
    <location>
        <begin position="1"/>
        <end position="457"/>
    </location>
</feature>
<feature type="region of interest" description="Precorrin-2 dehydrogenase /sirohydrochlorin ferrochelatase" evidence="1">
    <location>
        <begin position="1"/>
        <end position="204"/>
    </location>
</feature>
<feature type="region of interest" description="Uroporphyrinogen-III C-methyltransferase" evidence="1">
    <location>
        <begin position="216"/>
        <end position="457"/>
    </location>
</feature>
<feature type="active site" description="Proton acceptor" evidence="1">
    <location>
        <position position="248"/>
    </location>
</feature>
<feature type="active site" description="Proton donor" evidence="1">
    <location>
        <position position="270"/>
    </location>
</feature>
<feature type="binding site" evidence="1">
    <location>
        <begin position="22"/>
        <end position="23"/>
    </location>
    <ligand>
        <name>NAD(+)</name>
        <dbReference type="ChEBI" id="CHEBI:57540"/>
    </ligand>
</feature>
<feature type="binding site" evidence="1">
    <location>
        <begin position="43"/>
        <end position="44"/>
    </location>
    <ligand>
        <name>NAD(+)</name>
        <dbReference type="ChEBI" id="CHEBI:57540"/>
    </ligand>
</feature>
<feature type="binding site" evidence="1">
    <location>
        <position position="225"/>
    </location>
    <ligand>
        <name>S-adenosyl-L-methionine</name>
        <dbReference type="ChEBI" id="CHEBI:59789"/>
    </ligand>
</feature>
<feature type="binding site" evidence="1">
    <location>
        <begin position="301"/>
        <end position="303"/>
    </location>
    <ligand>
        <name>S-adenosyl-L-methionine</name>
        <dbReference type="ChEBI" id="CHEBI:59789"/>
    </ligand>
</feature>
<feature type="binding site" evidence="1">
    <location>
        <position position="306"/>
    </location>
    <ligand>
        <name>S-adenosyl-L-methionine</name>
        <dbReference type="ChEBI" id="CHEBI:59789"/>
    </ligand>
</feature>
<feature type="binding site" evidence="1">
    <location>
        <begin position="331"/>
        <end position="332"/>
    </location>
    <ligand>
        <name>S-adenosyl-L-methionine</name>
        <dbReference type="ChEBI" id="CHEBI:59789"/>
    </ligand>
</feature>
<feature type="binding site" evidence="1">
    <location>
        <position position="382"/>
    </location>
    <ligand>
        <name>S-adenosyl-L-methionine</name>
        <dbReference type="ChEBI" id="CHEBI:59789"/>
    </ligand>
</feature>
<feature type="binding site" evidence="1">
    <location>
        <position position="411"/>
    </location>
    <ligand>
        <name>S-adenosyl-L-methionine</name>
        <dbReference type="ChEBI" id="CHEBI:59789"/>
    </ligand>
</feature>
<feature type="modified residue" description="Phosphoserine" evidence="1">
    <location>
        <position position="128"/>
    </location>
</feature>
<keyword id="KW-0169">Cobalamin biosynthesis</keyword>
<keyword id="KW-0456">Lyase</keyword>
<keyword id="KW-0489">Methyltransferase</keyword>
<keyword id="KW-0511">Multifunctional enzyme</keyword>
<keyword id="KW-0520">NAD</keyword>
<keyword id="KW-0560">Oxidoreductase</keyword>
<keyword id="KW-0597">Phosphoprotein</keyword>
<keyword id="KW-0627">Porphyrin biosynthesis</keyword>
<keyword id="KW-1185">Reference proteome</keyword>
<keyword id="KW-0949">S-adenosyl-L-methionine</keyword>
<keyword id="KW-0808">Transferase</keyword>
<protein>
    <recommendedName>
        <fullName evidence="1">Siroheme synthase</fullName>
    </recommendedName>
    <domain>
        <recommendedName>
            <fullName evidence="1">Uroporphyrinogen-III C-methyltransferase</fullName>
            <shortName evidence="1">Urogen III methylase</shortName>
            <ecNumber evidence="1">2.1.1.107</ecNumber>
        </recommendedName>
        <alternativeName>
            <fullName evidence="1">SUMT</fullName>
        </alternativeName>
        <alternativeName>
            <fullName evidence="1">Uroporphyrinogen III methylase</fullName>
            <shortName evidence="1">UROM</shortName>
        </alternativeName>
    </domain>
    <domain>
        <recommendedName>
            <fullName evidence="1">Precorrin-2 dehydrogenase</fullName>
            <ecNumber evidence="1">1.3.1.76</ecNumber>
        </recommendedName>
    </domain>
    <domain>
        <recommendedName>
            <fullName evidence="1">Sirohydrochlorin ferrochelatase</fullName>
            <ecNumber evidence="1">4.99.1.4</ecNumber>
        </recommendedName>
    </domain>
</protein>
<name>CYSG_SHIFL</name>
<comment type="function">
    <text evidence="1">Multifunctional enzyme that catalyzes the SAM-dependent methylations of uroporphyrinogen III at position C-2 and C-7 to form precorrin-2 via precorrin-1. Then it catalyzes the NAD-dependent ring dehydrogenation of precorrin-2 to yield sirohydrochlorin. Finally, it catalyzes the ferrochelation of sirohydrochlorin to yield siroheme.</text>
</comment>
<comment type="catalytic activity">
    <reaction evidence="1">
        <text>uroporphyrinogen III + 2 S-adenosyl-L-methionine = precorrin-2 + 2 S-adenosyl-L-homocysteine + H(+)</text>
        <dbReference type="Rhea" id="RHEA:32459"/>
        <dbReference type="ChEBI" id="CHEBI:15378"/>
        <dbReference type="ChEBI" id="CHEBI:57308"/>
        <dbReference type="ChEBI" id="CHEBI:57856"/>
        <dbReference type="ChEBI" id="CHEBI:58827"/>
        <dbReference type="ChEBI" id="CHEBI:59789"/>
        <dbReference type="EC" id="2.1.1.107"/>
    </reaction>
</comment>
<comment type="catalytic activity">
    <reaction evidence="1">
        <text>precorrin-2 + NAD(+) = sirohydrochlorin + NADH + 2 H(+)</text>
        <dbReference type="Rhea" id="RHEA:15613"/>
        <dbReference type="ChEBI" id="CHEBI:15378"/>
        <dbReference type="ChEBI" id="CHEBI:57540"/>
        <dbReference type="ChEBI" id="CHEBI:57945"/>
        <dbReference type="ChEBI" id="CHEBI:58351"/>
        <dbReference type="ChEBI" id="CHEBI:58827"/>
        <dbReference type="EC" id="1.3.1.76"/>
    </reaction>
</comment>
<comment type="catalytic activity">
    <reaction evidence="1">
        <text>siroheme + 2 H(+) = sirohydrochlorin + Fe(2+)</text>
        <dbReference type="Rhea" id="RHEA:24360"/>
        <dbReference type="ChEBI" id="CHEBI:15378"/>
        <dbReference type="ChEBI" id="CHEBI:29033"/>
        <dbReference type="ChEBI" id="CHEBI:58351"/>
        <dbReference type="ChEBI" id="CHEBI:60052"/>
        <dbReference type="EC" id="4.99.1.4"/>
    </reaction>
</comment>
<comment type="pathway">
    <text evidence="1">Cofactor biosynthesis; adenosylcobalamin biosynthesis; precorrin-2 from uroporphyrinogen III: step 1/1.</text>
</comment>
<comment type="pathway">
    <text evidence="1">Cofactor biosynthesis; adenosylcobalamin biosynthesis; sirohydrochlorin from precorrin-2: step 1/1.</text>
</comment>
<comment type="pathway">
    <text evidence="1">Porphyrin-containing compound metabolism; siroheme biosynthesis; precorrin-2 from uroporphyrinogen III: step 1/1.</text>
</comment>
<comment type="pathway">
    <text evidence="1">Porphyrin-containing compound metabolism; siroheme biosynthesis; siroheme from sirohydrochlorin: step 1/1.</text>
</comment>
<comment type="pathway">
    <text evidence="1">Porphyrin-containing compound metabolism; siroheme biosynthesis; sirohydrochlorin from precorrin-2: step 1/1.</text>
</comment>
<comment type="similarity">
    <text evidence="1">In the N-terminal section; belongs to the precorrin-2 dehydrogenase / sirohydrochlorin ferrochelatase family.</text>
</comment>
<comment type="similarity">
    <text evidence="1">In the C-terminal section; belongs to the precorrin methyltransferase family.</text>
</comment>
<accession>Q83JB3</accession>
<accession>Q7BYR8</accession>
<evidence type="ECO:0000255" key="1">
    <source>
        <dbReference type="HAMAP-Rule" id="MF_01646"/>
    </source>
</evidence>
<dbReference type="EC" id="2.1.1.107" evidence="1"/>
<dbReference type="EC" id="1.3.1.76" evidence="1"/>
<dbReference type="EC" id="4.99.1.4" evidence="1"/>
<dbReference type="EMBL" id="AE005674">
    <property type="protein sequence ID" value="AAN44850.1"/>
    <property type="molecule type" value="Genomic_DNA"/>
</dbReference>
<dbReference type="EMBL" id="AE014073">
    <property type="protein sequence ID" value="AAP19328.1"/>
    <property type="molecule type" value="Genomic_DNA"/>
</dbReference>
<dbReference type="RefSeq" id="NP_709143.1">
    <property type="nucleotide sequence ID" value="NC_004337.2"/>
</dbReference>
<dbReference type="RefSeq" id="WP_000349881.1">
    <property type="nucleotide sequence ID" value="NZ_WPGW01000003.1"/>
</dbReference>
<dbReference type="SMR" id="Q83JB3"/>
<dbReference type="STRING" id="198214.SF3387"/>
<dbReference type="PaxDb" id="198214-SF3387"/>
<dbReference type="GeneID" id="1026959"/>
<dbReference type="GeneID" id="93778629"/>
<dbReference type="KEGG" id="sfl:SF3387"/>
<dbReference type="KEGG" id="sfx:S4376"/>
<dbReference type="PATRIC" id="fig|198214.7.peg.3999"/>
<dbReference type="HOGENOM" id="CLU_011276_2_0_6"/>
<dbReference type="UniPathway" id="UPA00148">
    <property type="reaction ID" value="UER00211"/>
</dbReference>
<dbReference type="UniPathway" id="UPA00148">
    <property type="reaction ID" value="UER00222"/>
</dbReference>
<dbReference type="UniPathway" id="UPA00262">
    <property type="reaction ID" value="UER00211"/>
</dbReference>
<dbReference type="UniPathway" id="UPA00262">
    <property type="reaction ID" value="UER00222"/>
</dbReference>
<dbReference type="UniPathway" id="UPA00262">
    <property type="reaction ID" value="UER00376"/>
</dbReference>
<dbReference type="Proteomes" id="UP000001006">
    <property type="component" value="Chromosome"/>
</dbReference>
<dbReference type="Proteomes" id="UP000002673">
    <property type="component" value="Chromosome"/>
</dbReference>
<dbReference type="GO" id="GO:0051287">
    <property type="term" value="F:NAD binding"/>
    <property type="evidence" value="ECO:0007669"/>
    <property type="project" value="InterPro"/>
</dbReference>
<dbReference type="GO" id="GO:0043115">
    <property type="term" value="F:precorrin-2 dehydrogenase activity"/>
    <property type="evidence" value="ECO:0007669"/>
    <property type="project" value="UniProtKB-UniRule"/>
</dbReference>
<dbReference type="GO" id="GO:0051266">
    <property type="term" value="F:sirohydrochlorin ferrochelatase activity"/>
    <property type="evidence" value="ECO:0007669"/>
    <property type="project" value="UniProtKB-EC"/>
</dbReference>
<dbReference type="GO" id="GO:0004851">
    <property type="term" value="F:uroporphyrin-III C-methyltransferase activity"/>
    <property type="evidence" value="ECO:0007669"/>
    <property type="project" value="UniProtKB-UniRule"/>
</dbReference>
<dbReference type="GO" id="GO:0009236">
    <property type="term" value="P:cobalamin biosynthetic process"/>
    <property type="evidence" value="ECO:0007669"/>
    <property type="project" value="UniProtKB-UniRule"/>
</dbReference>
<dbReference type="GO" id="GO:0032259">
    <property type="term" value="P:methylation"/>
    <property type="evidence" value="ECO:0007669"/>
    <property type="project" value="UniProtKB-KW"/>
</dbReference>
<dbReference type="GO" id="GO:0019354">
    <property type="term" value="P:siroheme biosynthetic process"/>
    <property type="evidence" value="ECO:0007669"/>
    <property type="project" value="UniProtKB-UniRule"/>
</dbReference>
<dbReference type="CDD" id="cd11642">
    <property type="entry name" value="SUMT"/>
    <property type="match status" value="1"/>
</dbReference>
<dbReference type="FunFam" id="1.10.8.210:FF:000001">
    <property type="entry name" value="Siroheme synthase"/>
    <property type="match status" value="1"/>
</dbReference>
<dbReference type="FunFam" id="3.30.160.110:FF:000001">
    <property type="entry name" value="Siroheme synthase"/>
    <property type="match status" value="1"/>
</dbReference>
<dbReference type="FunFam" id="3.30.950.10:FF:000001">
    <property type="entry name" value="Siroheme synthase"/>
    <property type="match status" value="1"/>
</dbReference>
<dbReference type="FunFam" id="3.40.1010.10:FF:000001">
    <property type="entry name" value="Siroheme synthase"/>
    <property type="match status" value="1"/>
</dbReference>
<dbReference type="FunFam" id="3.40.50.720:FF:000092">
    <property type="entry name" value="Siroheme synthase"/>
    <property type="match status" value="1"/>
</dbReference>
<dbReference type="Gene3D" id="3.40.1010.10">
    <property type="entry name" value="Cobalt-precorrin-4 Transmethylase, Domain 1"/>
    <property type="match status" value="1"/>
</dbReference>
<dbReference type="Gene3D" id="3.30.950.10">
    <property type="entry name" value="Methyltransferase, Cobalt-precorrin-4 Transmethylase, Domain 2"/>
    <property type="match status" value="1"/>
</dbReference>
<dbReference type="Gene3D" id="3.40.50.720">
    <property type="entry name" value="NAD(P)-binding Rossmann-like Domain"/>
    <property type="match status" value="1"/>
</dbReference>
<dbReference type="Gene3D" id="1.10.8.210">
    <property type="entry name" value="Sirohaem synthase, dimerisation domain"/>
    <property type="match status" value="1"/>
</dbReference>
<dbReference type="Gene3D" id="3.30.160.110">
    <property type="entry name" value="Siroheme synthase, domain 2"/>
    <property type="match status" value="1"/>
</dbReference>
<dbReference type="HAMAP" id="MF_01646">
    <property type="entry name" value="Siroheme_synth"/>
    <property type="match status" value="1"/>
</dbReference>
<dbReference type="InterPro" id="IPR000878">
    <property type="entry name" value="4pyrrol_Mease"/>
</dbReference>
<dbReference type="InterPro" id="IPR035996">
    <property type="entry name" value="4pyrrol_Methylase_sf"/>
</dbReference>
<dbReference type="InterPro" id="IPR014777">
    <property type="entry name" value="4pyrrole_Mease_sub1"/>
</dbReference>
<dbReference type="InterPro" id="IPR014776">
    <property type="entry name" value="4pyrrole_Mease_sub2"/>
</dbReference>
<dbReference type="InterPro" id="IPR006366">
    <property type="entry name" value="CobA/CysG_C"/>
</dbReference>
<dbReference type="InterPro" id="IPR036291">
    <property type="entry name" value="NAD(P)-bd_dom_sf"/>
</dbReference>
<dbReference type="InterPro" id="IPR050161">
    <property type="entry name" value="Siro_Cobalamin_biosynth"/>
</dbReference>
<dbReference type="InterPro" id="IPR037115">
    <property type="entry name" value="Sirohaem_synt_dimer_dom_sf"/>
</dbReference>
<dbReference type="InterPro" id="IPR012409">
    <property type="entry name" value="Sirohaem_synth"/>
</dbReference>
<dbReference type="InterPro" id="IPR028281">
    <property type="entry name" value="Sirohaem_synthase_central"/>
</dbReference>
<dbReference type="InterPro" id="IPR019478">
    <property type="entry name" value="Sirohaem_synthase_dimer_dom"/>
</dbReference>
<dbReference type="InterPro" id="IPR006367">
    <property type="entry name" value="Sirohaem_synthase_N"/>
</dbReference>
<dbReference type="InterPro" id="IPR003043">
    <property type="entry name" value="Uropor_MeTrfase_CS"/>
</dbReference>
<dbReference type="NCBIfam" id="TIGR01469">
    <property type="entry name" value="cobA_cysG_Cterm"/>
    <property type="match status" value="1"/>
</dbReference>
<dbReference type="NCBIfam" id="TIGR01470">
    <property type="entry name" value="cysG_Nterm"/>
    <property type="match status" value="1"/>
</dbReference>
<dbReference type="NCBIfam" id="NF004790">
    <property type="entry name" value="PRK06136.1"/>
    <property type="match status" value="1"/>
</dbReference>
<dbReference type="NCBIfam" id="NF007922">
    <property type="entry name" value="PRK10637.1"/>
    <property type="match status" value="1"/>
</dbReference>
<dbReference type="PANTHER" id="PTHR45790:SF1">
    <property type="entry name" value="SIROHEME SYNTHASE"/>
    <property type="match status" value="1"/>
</dbReference>
<dbReference type="PANTHER" id="PTHR45790">
    <property type="entry name" value="SIROHEME SYNTHASE-RELATED"/>
    <property type="match status" value="1"/>
</dbReference>
<dbReference type="Pfam" id="PF10414">
    <property type="entry name" value="CysG_dimeriser"/>
    <property type="match status" value="1"/>
</dbReference>
<dbReference type="Pfam" id="PF13241">
    <property type="entry name" value="NAD_binding_7"/>
    <property type="match status" value="1"/>
</dbReference>
<dbReference type="Pfam" id="PF14824">
    <property type="entry name" value="Sirohm_synth_M"/>
    <property type="match status" value="1"/>
</dbReference>
<dbReference type="Pfam" id="PF00590">
    <property type="entry name" value="TP_methylase"/>
    <property type="match status" value="1"/>
</dbReference>
<dbReference type="PIRSF" id="PIRSF036426">
    <property type="entry name" value="Sirohaem_synth"/>
    <property type="match status" value="1"/>
</dbReference>
<dbReference type="SUPFAM" id="SSF51735">
    <property type="entry name" value="NAD(P)-binding Rossmann-fold domains"/>
    <property type="match status" value="1"/>
</dbReference>
<dbReference type="SUPFAM" id="SSF75615">
    <property type="entry name" value="Siroheme synthase middle domains-like"/>
    <property type="match status" value="1"/>
</dbReference>
<dbReference type="SUPFAM" id="SSF53790">
    <property type="entry name" value="Tetrapyrrole methylase"/>
    <property type="match status" value="1"/>
</dbReference>
<dbReference type="PROSITE" id="PS00839">
    <property type="entry name" value="SUMT_1"/>
    <property type="match status" value="1"/>
</dbReference>
<dbReference type="PROSITE" id="PS00840">
    <property type="entry name" value="SUMT_2"/>
    <property type="match status" value="1"/>
</dbReference>
<gene>
    <name evidence="1" type="primary">cysG</name>
    <name type="ordered locus">SF3387</name>
    <name type="ordered locus">S4376</name>
</gene>
<organism>
    <name type="scientific">Shigella flexneri</name>
    <dbReference type="NCBI Taxonomy" id="623"/>
    <lineage>
        <taxon>Bacteria</taxon>
        <taxon>Pseudomonadati</taxon>
        <taxon>Pseudomonadota</taxon>
        <taxon>Gammaproteobacteria</taxon>
        <taxon>Enterobacterales</taxon>
        <taxon>Enterobacteriaceae</taxon>
        <taxon>Shigella</taxon>
    </lineage>
</organism>
<proteinExistence type="inferred from homology"/>
<reference key="1">
    <citation type="journal article" date="2002" name="Nucleic Acids Res.">
        <title>Genome sequence of Shigella flexneri 2a: insights into pathogenicity through comparison with genomes of Escherichia coli K12 and O157.</title>
        <authorList>
            <person name="Jin Q."/>
            <person name="Yuan Z."/>
            <person name="Xu J."/>
            <person name="Wang Y."/>
            <person name="Shen Y."/>
            <person name="Lu W."/>
            <person name="Wang J."/>
            <person name="Liu H."/>
            <person name="Yang J."/>
            <person name="Yang F."/>
            <person name="Zhang X."/>
            <person name="Zhang J."/>
            <person name="Yang G."/>
            <person name="Wu H."/>
            <person name="Qu D."/>
            <person name="Dong J."/>
            <person name="Sun L."/>
            <person name="Xue Y."/>
            <person name="Zhao A."/>
            <person name="Gao Y."/>
            <person name="Zhu J."/>
            <person name="Kan B."/>
            <person name="Ding K."/>
            <person name="Chen S."/>
            <person name="Cheng H."/>
            <person name="Yao Z."/>
            <person name="He B."/>
            <person name="Chen R."/>
            <person name="Ma D."/>
            <person name="Qiang B."/>
            <person name="Wen Y."/>
            <person name="Hou Y."/>
            <person name="Yu J."/>
        </authorList>
    </citation>
    <scope>NUCLEOTIDE SEQUENCE [LARGE SCALE GENOMIC DNA]</scope>
    <source>
        <strain>301 / Serotype 2a</strain>
    </source>
</reference>
<reference key="2">
    <citation type="journal article" date="2003" name="Infect. Immun.">
        <title>Complete genome sequence and comparative genomics of Shigella flexneri serotype 2a strain 2457T.</title>
        <authorList>
            <person name="Wei J."/>
            <person name="Goldberg M.B."/>
            <person name="Burland V."/>
            <person name="Venkatesan M.M."/>
            <person name="Deng W."/>
            <person name="Fournier G."/>
            <person name="Mayhew G.F."/>
            <person name="Plunkett G. III"/>
            <person name="Rose D.J."/>
            <person name="Darling A."/>
            <person name="Mau B."/>
            <person name="Perna N.T."/>
            <person name="Payne S.M."/>
            <person name="Runyen-Janecky L.J."/>
            <person name="Zhou S."/>
            <person name="Schwartz D.C."/>
            <person name="Blattner F.R."/>
        </authorList>
    </citation>
    <scope>NUCLEOTIDE SEQUENCE [LARGE SCALE GENOMIC DNA]</scope>
    <source>
        <strain>ATCC 700930 / 2457T / Serotype 2a</strain>
    </source>
</reference>
<sequence length="457" mass="50011">MDHLPIFCQLRDRDCLIVGGGDVAERKARLLLDAGARLTVNALAFIPQFTAWADAGMLTLVEGPFDESLLDTCWLAIAATDDDTLNQRVSEAAEARRIFCNVVDAPKAASFIMPSIIDRSPLMVAVSSGGTSPVLARLLREKLESLLPLHLGQVAKYAGQLRGRVKQQFATMSERRRFWEKLFVNDRLAQSLANNDQKAITETTEQLINEPLDHRGEVVLVGAGPGDAGLLTLKGLQQIQQADVVVYDRLVSDDIMNLVRRDADRVFVGKRAGYHCVPQEEINQILLREAQKGKRVVRLKGGDPFIFGRGGEELETLCNAGIPFSVVPGITAASGCSAYSGIPLTHRDYAQSVRLITGHLKTGGELDWENLAAEKQTLVFYMGLNQAATIQQKLIEHGMPGEMPVAIVENGTAVTQRVIDGTLTQLGELAQQMNSPSLIIIGRVVGLRDKLNWFSNH</sequence>